<evidence type="ECO:0000250" key="1"/>
<evidence type="ECO:0000305" key="2"/>
<accession>P9WFW1</accession>
<accession>L0TCZ2</accession>
<accession>P0A634</accession>
<accession>P96862</accession>
<reference key="1">
    <citation type="journal article" date="1998" name="Nature">
        <title>Deciphering the biology of Mycobacterium tuberculosis from the complete genome sequence.</title>
        <authorList>
            <person name="Cole S.T."/>
            <person name="Brosch R."/>
            <person name="Parkhill J."/>
            <person name="Garnier T."/>
            <person name="Churcher C.M."/>
            <person name="Harris D.E."/>
            <person name="Gordon S.V."/>
            <person name="Eiglmeier K."/>
            <person name="Gas S."/>
            <person name="Barry C.E. III"/>
            <person name="Tekaia F."/>
            <person name="Badcock K."/>
            <person name="Basham D."/>
            <person name="Brown D."/>
            <person name="Chillingworth T."/>
            <person name="Connor R."/>
            <person name="Davies R.M."/>
            <person name="Devlin K."/>
            <person name="Feltwell T."/>
            <person name="Gentles S."/>
            <person name="Hamlin N."/>
            <person name="Holroyd S."/>
            <person name="Hornsby T."/>
            <person name="Jagels K."/>
            <person name="Krogh A."/>
            <person name="McLean J."/>
            <person name="Moule S."/>
            <person name="Murphy L.D."/>
            <person name="Oliver S."/>
            <person name="Osborne J."/>
            <person name="Quail M.A."/>
            <person name="Rajandream M.A."/>
            <person name="Rogers J."/>
            <person name="Rutter S."/>
            <person name="Seeger K."/>
            <person name="Skelton S."/>
            <person name="Squares S."/>
            <person name="Squares R."/>
            <person name="Sulston J.E."/>
            <person name="Taylor K."/>
            <person name="Whitehead S."/>
            <person name="Barrell B.G."/>
        </authorList>
    </citation>
    <scope>NUCLEOTIDE SEQUENCE [LARGE SCALE GENOMIC DNA]</scope>
    <source>
        <strain>ATCC 25618 / H37Rv</strain>
    </source>
</reference>
<reference key="2">
    <citation type="journal article" date="2011" name="Mol. Cell. Proteomics">
        <title>Proteogenomic analysis of Mycobacterium tuberculosis by high resolution mass spectrometry.</title>
        <authorList>
            <person name="Kelkar D.S."/>
            <person name="Kumar D."/>
            <person name="Kumar P."/>
            <person name="Balakrishnan L."/>
            <person name="Muthusamy B."/>
            <person name="Yadav A.K."/>
            <person name="Shrivastava P."/>
            <person name="Marimuthu A."/>
            <person name="Anand S."/>
            <person name="Sundaram H."/>
            <person name="Kingsbury R."/>
            <person name="Harsha H.C."/>
            <person name="Nair B."/>
            <person name="Prasad T.S."/>
            <person name="Chauhan D.S."/>
            <person name="Katoch K."/>
            <person name="Katoch V.M."/>
            <person name="Kumar P."/>
            <person name="Chaerkady R."/>
            <person name="Ramachandran S."/>
            <person name="Dash D."/>
            <person name="Pandey A."/>
        </authorList>
    </citation>
    <scope>IDENTIFICATION BY MASS SPECTROMETRY [LARGE SCALE ANALYSIS]</scope>
    <source>
        <strain>ATCC 25618 / H37Rv</strain>
    </source>
</reference>
<dbReference type="EC" id="6.1.1.16"/>
<dbReference type="EMBL" id="AL123456">
    <property type="protein sequence ID" value="CCP46403.1"/>
    <property type="molecule type" value="Genomic_DNA"/>
</dbReference>
<dbReference type="PIR" id="B70607">
    <property type="entry name" value="B70607"/>
</dbReference>
<dbReference type="RefSeq" id="WP_003900108.1">
    <property type="nucleotide sequence ID" value="NZ_NVQJ01000014.1"/>
</dbReference>
<dbReference type="RefSeq" id="YP_177992.1">
    <property type="nucleotide sequence ID" value="NC_000962.3"/>
</dbReference>
<dbReference type="SMR" id="P9WFW1"/>
<dbReference type="FunCoup" id="P9WFW1">
    <property type="interactions" value="361"/>
</dbReference>
<dbReference type="STRING" id="83332.Rv3580c"/>
<dbReference type="PaxDb" id="83332-Rv3580c"/>
<dbReference type="DNASU" id="888628"/>
<dbReference type="GeneID" id="45427568"/>
<dbReference type="GeneID" id="888628"/>
<dbReference type="KEGG" id="mtu:Rv3580c"/>
<dbReference type="KEGG" id="mtv:RVBD_3580c"/>
<dbReference type="TubercuList" id="Rv3580c"/>
<dbReference type="eggNOG" id="COG0215">
    <property type="taxonomic scope" value="Bacteria"/>
</dbReference>
<dbReference type="InParanoid" id="P9WFW1"/>
<dbReference type="OrthoDB" id="9815130at2"/>
<dbReference type="PhylomeDB" id="P9WFW1"/>
<dbReference type="Proteomes" id="UP000001584">
    <property type="component" value="Chromosome"/>
</dbReference>
<dbReference type="GO" id="GO:0005737">
    <property type="term" value="C:cytoplasm"/>
    <property type="evidence" value="ECO:0000318"/>
    <property type="project" value="GO_Central"/>
</dbReference>
<dbReference type="GO" id="GO:0005829">
    <property type="term" value="C:cytosol"/>
    <property type="evidence" value="ECO:0007005"/>
    <property type="project" value="MTBBASE"/>
</dbReference>
<dbReference type="GO" id="GO:0005524">
    <property type="term" value="F:ATP binding"/>
    <property type="evidence" value="ECO:0000318"/>
    <property type="project" value="GO_Central"/>
</dbReference>
<dbReference type="GO" id="GO:0004817">
    <property type="term" value="F:cysteine-tRNA ligase activity"/>
    <property type="evidence" value="ECO:0000318"/>
    <property type="project" value="GO_Central"/>
</dbReference>
<dbReference type="GO" id="GO:0008270">
    <property type="term" value="F:zinc ion binding"/>
    <property type="evidence" value="ECO:0007669"/>
    <property type="project" value="UniProtKB-UniRule"/>
</dbReference>
<dbReference type="GO" id="GO:0006423">
    <property type="term" value="P:cysteinyl-tRNA aminoacylation"/>
    <property type="evidence" value="ECO:0000318"/>
    <property type="project" value="GO_Central"/>
</dbReference>
<dbReference type="CDD" id="cd00672">
    <property type="entry name" value="CysRS_core"/>
    <property type="match status" value="1"/>
</dbReference>
<dbReference type="FunFam" id="1.20.120.1910:FF:000006">
    <property type="entry name" value="Cysteine--tRNA ligase"/>
    <property type="match status" value="1"/>
</dbReference>
<dbReference type="FunFam" id="3.40.50.620:FF:000068">
    <property type="entry name" value="Cysteine--tRNA ligase"/>
    <property type="match status" value="1"/>
</dbReference>
<dbReference type="Gene3D" id="1.20.120.1910">
    <property type="entry name" value="Cysteine-tRNA ligase, C-terminal anti-codon recognition domain"/>
    <property type="match status" value="1"/>
</dbReference>
<dbReference type="Gene3D" id="3.40.50.620">
    <property type="entry name" value="HUPs"/>
    <property type="match status" value="1"/>
</dbReference>
<dbReference type="HAMAP" id="MF_00041">
    <property type="entry name" value="Cys_tRNA_synth"/>
    <property type="match status" value="1"/>
</dbReference>
<dbReference type="InterPro" id="IPR015803">
    <property type="entry name" value="Cys-tRNA-ligase"/>
</dbReference>
<dbReference type="InterPro" id="IPR015273">
    <property type="entry name" value="Cys-tRNA-synt_Ia_DALR"/>
</dbReference>
<dbReference type="InterPro" id="IPR024909">
    <property type="entry name" value="Cys-tRNA/MSH_ligase"/>
</dbReference>
<dbReference type="InterPro" id="IPR014729">
    <property type="entry name" value="Rossmann-like_a/b/a_fold"/>
</dbReference>
<dbReference type="InterPro" id="IPR032678">
    <property type="entry name" value="tRNA-synt_1_cat_dom"/>
</dbReference>
<dbReference type="InterPro" id="IPR009080">
    <property type="entry name" value="tRNAsynth_Ia_anticodon-bd"/>
</dbReference>
<dbReference type="NCBIfam" id="TIGR00435">
    <property type="entry name" value="cysS"/>
    <property type="match status" value="1"/>
</dbReference>
<dbReference type="PANTHER" id="PTHR10890:SF30">
    <property type="entry name" value="CYSTEINE--TRNA LIGASE"/>
    <property type="match status" value="1"/>
</dbReference>
<dbReference type="PANTHER" id="PTHR10890">
    <property type="entry name" value="CYSTEINYL-TRNA SYNTHETASE"/>
    <property type="match status" value="1"/>
</dbReference>
<dbReference type="Pfam" id="PF09190">
    <property type="entry name" value="DALR_2"/>
    <property type="match status" value="1"/>
</dbReference>
<dbReference type="Pfam" id="PF01406">
    <property type="entry name" value="tRNA-synt_1e"/>
    <property type="match status" value="1"/>
</dbReference>
<dbReference type="PRINTS" id="PR00983">
    <property type="entry name" value="TRNASYNTHCYS"/>
</dbReference>
<dbReference type="SMART" id="SM00840">
    <property type="entry name" value="DALR_2"/>
    <property type="match status" value="1"/>
</dbReference>
<dbReference type="SUPFAM" id="SSF47323">
    <property type="entry name" value="Anticodon-binding domain of a subclass of class I aminoacyl-tRNA synthetases"/>
    <property type="match status" value="1"/>
</dbReference>
<dbReference type="SUPFAM" id="SSF52374">
    <property type="entry name" value="Nucleotidylyl transferase"/>
    <property type="match status" value="1"/>
</dbReference>
<sequence length="469" mass="51855">MTDRARLRLHDTAAGVVRDFVPLRPGHVSIYLCGATVQGLPHIGHVRSGVAFDILRRWLLARGYDVAFIRNVTDIEDKILAKAAAAGRPWWEWAATHERAFTAAYDALDVLPPSAEPRATGHITQMIEMIERLIQAGHAYTGGGDVYFDVLSYPEYGQLSGHKIDDVHQGEGVAAGKRDQRDFTLWKGEKPGEPSWPTPWGRGRPGWHLECSAMARSYLGPEFDIHCGGMDLVFPHHENEIAQSRAAGDGFARYWLHNGWVTMGGEKMSKSLGNVLSMPAMLQRVRPAELRYYLGSAHYRSMLEFSETAMQDAVKAYVGLEDFLHRVRTRVGAVCPGDPTPRFAEALDDDLSVPIALAEIHHVRAEGNRALDAGDHDGALRSASAIRAMMGILGCDPLDQRWESRDETSAALAAVDVLVQAELQNREKAREQRNWALADEIRGRLKRAGIEVTDTADGPQWSLLGGDTK</sequence>
<feature type="chain" id="PRO_0000159441" description="Cysteine--tRNA ligase">
    <location>
        <begin position="1"/>
        <end position="469"/>
    </location>
</feature>
<feature type="short sequence motif" description="'HIGH' region">
    <location>
        <begin position="35"/>
        <end position="45"/>
    </location>
</feature>
<feature type="short sequence motif" description="'KMSKS' region">
    <location>
        <begin position="267"/>
        <end position="271"/>
    </location>
</feature>
<feature type="binding site" evidence="1">
    <location>
        <position position="33"/>
    </location>
    <ligand>
        <name>Zn(2+)</name>
        <dbReference type="ChEBI" id="CHEBI:29105"/>
    </ligand>
</feature>
<feature type="binding site" evidence="1">
    <location>
        <position position="211"/>
    </location>
    <ligand>
        <name>Zn(2+)</name>
        <dbReference type="ChEBI" id="CHEBI:29105"/>
    </ligand>
</feature>
<feature type="binding site" evidence="1">
    <location>
        <position position="236"/>
    </location>
    <ligand>
        <name>Zn(2+)</name>
        <dbReference type="ChEBI" id="CHEBI:29105"/>
    </ligand>
</feature>
<feature type="binding site" evidence="1">
    <location>
        <position position="240"/>
    </location>
    <ligand>
        <name>Zn(2+)</name>
        <dbReference type="ChEBI" id="CHEBI:29105"/>
    </ligand>
</feature>
<feature type="binding site" evidence="1">
    <location>
        <position position="270"/>
    </location>
    <ligand>
        <name>ATP</name>
        <dbReference type="ChEBI" id="CHEBI:30616"/>
    </ligand>
</feature>
<keyword id="KW-0030">Aminoacyl-tRNA synthetase</keyword>
<keyword id="KW-0067">ATP-binding</keyword>
<keyword id="KW-0963">Cytoplasm</keyword>
<keyword id="KW-0436">Ligase</keyword>
<keyword id="KW-0479">Metal-binding</keyword>
<keyword id="KW-0547">Nucleotide-binding</keyword>
<keyword id="KW-0648">Protein biosynthesis</keyword>
<keyword id="KW-1185">Reference proteome</keyword>
<keyword id="KW-0862">Zinc</keyword>
<comment type="catalytic activity">
    <reaction>
        <text>tRNA(Cys) + L-cysteine + ATP = L-cysteinyl-tRNA(Cys) + AMP + diphosphate</text>
        <dbReference type="Rhea" id="RHEA:17773"/>
        <dbReference type="Rhea" id="RHEA-COMP:9661"/>
        <dbReference type="Rhea" id="RHEA-COMP:9679"/>
        <dbReference type="ChEBI" id="CHEBI:30616"/>
        <dbReference type="ChEBI" id="CHEBI:33019"/>
        <dbReference type="ChEBI" id="CHEBI:35235"/>
        <dbReference type="ChEBI" id="CHEBI:78442"/>
        <dbReference type="ChEBI" id="CHEBI:78517"/>
        <dbReference type="ChEBI" id="CHEBI:456215"/>
        <dbReference type="EC" id="6.1.1.16"/>
    </reaction>
</comment>
<comment type="cofactor">
    <cofactor evidence="1">
        <name>Zn(2+)</name>
        <dbReference type="ChEBI" id="CHEBI:29105"/>
    </cofactor>
    <text evidence="1">Binds 1 zinc ion per subunit.</text>
</comment>
<comment type="subunit">
    <text evidence="1">Monomer.</text>
</comment>
<comment type="subcellular location">
    <subcellularLocation>
        <location evidence="1">Cytoplasm</location>
    </subcellularLocation>
</comment>
<comment type="similarity">
    <text evidence="2">Belongs to the class-I aminoacyl-tRNA synthetase family.</text>
</comment>
<organism>
    <name type="scientific">Mycobacterium tuberculosis (strain ATCC 25618 / H37Rv)</name>
    <dbReference type="NCBI Taxonomy" id="83332"/>
    <lineage>
        <taxon>Bacteria</taxon>
        <taxon>Bacillati</taxon>
        <taxon>Actinomycetota</taxon>
        <taxon>Actinomycetes</taxon>
        <taxon>Mycobacteriales</taxon>
        <taxon>Mycobacteriaceae</taxon>
        <taxon>Mycobacterium</taxon>
        <taxon>Mycobacterium tuberculosis complex</taxon>
    </lineage>
</organism>
<proteinExistence type="evidence at protein level"/>
<name>SYC_MYCTU</name>
<protein>
    <recommendedName>
        <fullName>Cysteine--tRNA ligase</fullName>
        <ecNumber>6.1.1.16</ecNumber>
    </recommendedName>
    <alternativeName>
        <fullName>Cysteinyl-tRNA synthetase</fullName>
        <shortName>CysRS</shortName>
    </alternativeName>
</protein>
<gene>
    <name type="primary">cysS</name>
    <name type="synonym">cysS1</name>
    <name type="ordered locus">Rv3580c</name>
    <name type="ORF">MTCY06G11.27c</name>
</gene>